<organism>
    <name type="scientific">Encephalitozoon cuniculi (strain GB-M1)</name>
    <name type="common">Microsporidian parasite</name>
    <dbReference type="NCBI Taxonomy" id="284813"/>
    <lineage>
        <taxon>Eukaryota</taxon>
        <taxon>Fungi</taxon>
        <taxon>Fungi incertae sedis</taxon>
        <taxon>Microsporidia</taxon>
        <taxon>Unikaryonidae</taxon>
        <taxon>Encephalitozoon</taxon>
    </lineage>
</organism>
<feature type="chain" id="PRO_0000104208" description="Probable protein transport protein Sec61 subunit gamma">
    <location>
        <begin position="1"/>
        <end position="72"/>
    </location>
</feature>
<feature type="topological domain" description="Cytoplasmic" evidence="2">
    <location>
        <begin position="1"/>
        <end position="40"/>
    </location>
</feature>
<feature type="transmembrane region" description="Helical" evidence="2">
    <location>
        <begin position="41"/>
        <end position="61"/>
    </location>
</feature>
<feature type="topological domain" description="Extracellular" evidence="2">
    <location>
        <begin position="62"/>
        <end position="72"/>
    </location>
</feature>
<dbReference type="EMBL" id="AL590445">
    <property type="protein sequence ID" value="CAD26608.1"/>
    <property type="molecule type" value="Genomic_DNA"/>
</dbReference>
<dbReference type="RefSeq" id="NP_597431.1">
    <property type="nucleotide sequence ID" value="NM_001041297.1"/>
</dbReference>
<dbReference type="SMR" id="Q8SRW9"/>
<dbReference type="FunCoup" id="Q8SRW9">
    <property type="interactions" value="110"/>
</dbReference>
<dbReference type="STRING" id="284813.Q8SRW9"/>
<dbReference type="GeneID" id="859097"/>
<dbReference type="KEGG" id="ecu:ECU05_0885"/>
<dbReference type="VEuPathDB" id="MicrosporidiaDB:ECU05_0885"/>
<dbReference type="HOGENOM" id="CLU_167752_2_1_1"/>
<dbReference type="InParanoid" id="Q8SRW9"/>
<dbReference type="OMA" id="PSSKEYW"/>
<dbReference type="OrthoDB" id="2194864at2759"/>
<dbReference type="Proteomes" id="UP000000819">
    <property type="component" value="Chromosome V"/>
</dbReference>
<dbReference type="GO" id="GO:0005789">
    <property type="term" value="C:endoplasmic reticulum membrane"/>
    <property type="evidence" value="ECO:0007669"/>
    <property type="project" value="UniProtKB-SubCell"/>
</dbReference>
<dbReference type="GO" id="GO:0008320">
    <property type="term" value="F:protein transmembrane transporter activity"/>
    <property type="evidence" value="ECO:0007669"/>
    <property type="project" value="InterPro"/>
</dbReference>
<dbReference type="GO" id="GO:0006886">
    <property type="term" value="P:intracellular protein transport"/>
    <property type="evidence" value="ECO:0007669"/>
    <property type="project" value="InterPro"/>
</dbReference>
<dbReference type="GO" id="GO:0006605">
    <property type="term" value="P:protein targeting"/>
    <property type="evidence" value="ECO:0007669"/>
    <property type="project" value="InterPro"/>
</dbReference>
<dbReference type="Gene3D" id="1.20.5.820">
    <property type="entry name" value="Preprotein translocase SecE subunit"/>
    <property type="match status" value="1"/>
</dbReference>
<dbReference type="HAMAP" id="MF_00422">
    <property type="entry name" value="SecE"/>
    <property type="match status" value="1"/>
</dbReference>
<dbReference type="InterPro" id="IPR023391">
    <property type="entry name" value="Prot_translocase_SecE_dom_sf"/>
</dbReference>
<dbReference type="InterPro" id="IPR008158">
    <property type="entry name" value="Translocase_Sec61-g"/>
</dbReference>
<dbReference type="InterPro" id="IPR001901">
    <property type="entry name" value="Translocase_SecE/Sec61-g"/>
</dbReference>
<dbReference type="NCBIfam" id="TIGR00327">
    <property type="entry name" value="secE_euk_arch"/>
    <property type="match status" value="1"/>
</dbReference>
<dbReference type="PANTHER" id="PTHR12309">
    <property type="entry name" value="SEC61 GAMMA SUBUNIT"/>
    <property type="match status" value="1"/>
</dbReference>
<dbReference type="Pfam" id="PF00584">
    <property type="entry name" value="SecE"/>
    <property type="match status" value="1"/>
</dbReference>
<dbReference type="SUPFAM" id="SSF103456">
    <property type="entry name" value="Preprotein translocase SecE subunit"/>
    <property type="match status" value="1"/>
</dbReference>
<proteinExistence type="inferred from homology"/>
<comment type="function">
    <text evidence="3">Necessary for protein translocation in the endoplasmic reticulum.</text>
</comment>
<comment type="subunit">
    <text evidence="1">Heterotrimeric complex composed of SEC61-alpha, SEC61-beta and SEC61-gamma.</text>
</comment>
<comment type="subcellular location">
    <subcellularLocation>
        <location evidence="3">Endoplasmic reticulum membrane</location>
        <topology evidence="3">Single-pass membrane protein</topology>
    </subcellularLocation>
</comment>
<comment type="similarity">
    <text evidence="3">Belongs to the SecE/SEC61-gamma family.</text>
</comment>
<accession>Q8SRW9</accession>
<evidence type="ECO:0000250" key="1"/>
<evidence type="ECO:0000255" key="2"/>
<evidence type="ECO:0000305" key="3"/>
<sequence length="72" mass="8040">MSQKLQKPSFLSEYLRSIRLFSKKCVRPSGKELSMSIKRHAIGIGFLGILGYAIKLIHIPINNIIVSSPGKE</sequence>
<keyword id="KW-0256">Endoplasmic reticulum</keyword>
<keyword id="KW-0472">Membrane</keyword>
<keyword id="KW-0653">Protein transport</keyword>
<keyword id="KW-1185">Reference proteome</keyword>
<keyword id="KW-0811">Translocation</keyword>
<keyword id="KW-0812">Transmembrane</keyword>
<keyword id="KW-1133">Transmembrane helix</keyword>
<keyword id="KW-0813">Transport</keyword>
<reference key="1">
    <citation type="journal article" date="2001" name="Nature">
        <title>Genome sequence and gene compaction of the eukaryote parasite Encephalitozoon cuniculi.</title>
        <authorList>
            <person name="Katinka M.D."/>
            <person name="Duprat S."/>
            <person name="Cornillot E."/>
            <person name="Metenier G."/>
            <person name="Thomarat F."/>
            <person name="Prensier G."/>
            <person name="Barbe V."/>
            <person name="Peyretaillade E."/>
            <person name="Brottier P."/>
            <person name="Wincker P."/>
            <person name="Delbac F."/>
            <person name="El Alaoui H."/>
            <person name="Peyret P."/>
            <person name="Saurin W."/>
            <person name="Gouy M."/>
            <person name="Weissenbach J."/>
            <person name="Vivares C.P."/>
        </authorList>
    </citation>
    <scope>NUCLEOTIDE SEQUENCE [LARGE SCALE GENOMIC DNA]</scope>
    <source>
        <strain>GB-M1</strain>
    </source>
</reference>
<protein>
    <recommendedName>
        <fullName>Probable protein transport protein Sec61 subunit gamma</fullName>
    </recommendedName>
</protein>
<name>SC61G_ENCCU</name>
<gene>
    <name type="ordered locus">ECU05_0885</name>
</gene>